<dbReference type="EC" id="4.1.2.4" evidence="1"/>
<dbReference type="EMBL" id="CP000056">
    <property type="protein sequence ID" value="AAX72688.1"/>
    <property type="molecule type" value="Genomic_DNA"/>
</dbReference>
<dbReference type="RefSeq" id="WP_011285148.1">
    <property type="nucleotide sequence ID" value="NC_007296.2"/>
</dbReference>
<dbReference type="SMR" id="Q48RH2"/>
<dbReference type="KEGG" id="spb:M28_Spy1578"/>
<dbReference type="HOGENOM" id="CLU_053595_0_2_9"/>
<dbReference type="UniPathway" id="UPA00002">
    <property type="reaction ID" value="UER00468"/>
</dbReference>
<dbReference type="GO" id="GO:0005737">
    <property type="term" value="C:cytoplasm"/>
    <property type="evidence" value="ECO:0007669"/>
    <property type="project" value="UniProtKB-SubCell"/>
</dbReference>
<dbReference type="GO" id="GO:0004139">
    <property type="term" value="F:deoxyribose-phosphate aldolase activity"/>
    <property type="evidence" value="ECO:0007669"/>
    <property type="project" value="UniProtKB-UniRule"/>
</dbReference>
<dbReference type="GO" id="GO:0006018">
    <property type="term" value="P:2-deoxyribose 1-phosphate catabolic process"/>
    <property type="evidence" value="ECO:0007669"/>
    <property type="project" value="UniProtKB-UniRule"/>
</dbReference>
<dbReference type="GO" id="GO:0016052">
    <property type="term" value="P:carbohydrate catabolic process"/>
    <property type="evidence" value="ECO:0007669"/>
    <property type="project" value="TreeGrafter"/>
</dbReference>
<dbReference type="GO" id="GO:0009264">
    <property type="term" value="P:deoxyribonucleotide catabolic process"/>
    <property type="evidence" value="ECO:0007669"/>
    <property type="project" value="InterPro"/>
</dbReference>
<dbReference type="CDD" id="cd00959">
    <property type="entry name" value="DeoC"/>
    <property type="match status" value="1"/>
</dbReference>
<dbReference type="FunFam" id="3.20.20.70:FF:000044">
    <property type="entry name" value="Deoxyribose-phosphate aldolase"/>
    <property type="match status" value="1"/>
</dbReference>
<dbReference type="Gene3D" id="3.20.20.70">
    <property type="entry name" value="Aldolase class I"/>
    <property type="match status" value="1"/>
</dbReference>
<dbReference type="HAMAP" id="MF_00114">
    <property type="entry name" value="DeoC_type1"/>
    <property type="match status" value="1"/>
</dbReference>
<dbReference type="InterPro" id="IPR013785">
    <property type="entry name" value="Aldolase_TIM"/>
</dbReference>
<dbReference type="InterPro" id="IPR011343">
    <property type="entry name" value="DeoC"/>
</dbReference>
<dbReference type="InterPro" id="IPR002915">
    <property type="entry name" value="DeoC/FbaB/LacD_aldolase"/>
</dbReference>
<dbReference type="InterPro" id="IPR028581">
    <property type="entry name" value="DeoC_typeI"/>
</dbReference>
<dbReference type="NCBIfam" id="TIGR00126">
    <property type="entry name" value="deoC"/>
    <property type="match status" value="1"/>
</dbReference>
<dbReference type="PANTHER" id="PTHR10889">
    <property type="entry name" value="DEOXYRIBOSE-PHOSPHATE ALDOLASE"/>
    <property type="match status" value="1"/>
</dbReference>
<dbReference type="PANTHER" id="PTHR10889:SF1">
    <property type="entry name" value="DEOXYRIBOSE-PHOSPHATE ALDOLASE"/>
    <property type="match status" value="1"/>
</dbReference>
<dbReference type="Pfam" id="PF01791">
    <property type="entry name" value="DeoC"/>
    <property type="match status" value="1"/>
</dbReference>
<dbReference type="PIRSF" id="PIRSF001357">
    <property type="entry name" value="DeoC"/>
    <property type="match status" value="1"/>
</dbReference>
<dbReference type="SMART" id="SM01133">
    <property type="entry name" value="DeoC"/>
    <property type="match status" value="1"/>
</dbReference>
<dbReference type="SUPFAM" id="SSF51569">
    <property type="entry name" value="Aldolase"/>
    <property type="match status" value="1"/>
</dbReference>
<reference key="1">
    <citation type="journal article" date="2005" name="J. Infect. Dis.">
        <title>Genome sequence of a serotype M28 strain of group A Streptococcus: potential new insights into puerperal sepsis and bacterial disease specificity.</title>
        <authorList>
            <person name="Green N.M."/>
            <person name="Zhang S."/>
            <person name="Porcella S.F."/>
            <person name="Nagiec M.J."/>
            <person name="Barbian K.D."/>
            <person name="Beres S.B."/>
            <person name="Lefebvre R.B."/>
            <person name="Musser J.M."/>
        </authorList>
    </citation>
    <scope>NUCLEOTIDE SEQUENCE [LARGE SCALE GENOMIC DNA]</scope>
    <source>
        <strain>MGAS6180</strain>
    </source>
</reference>
<sequence length="223" mass="23950">MEVKDILKTVDHTLLATTATWPEIQTILDDAMAYETASACIPASYVKKAAEYVSGKLAICTVIGFPNGYSTTAAKVFECQDAIQNGADEIDMVINLTDVKNGDFDTVEEEIRQIKAACQDHILKVIVETCQLTKEELIELCGVVTRSGADFIKTSTGFSTAGATFEDVEVMAKYVGEGVKIKAAGGISSLEDAKTFIALGASRLGTSRIIKIVKNEATKTDSY</sequence>
<comment type="function">
    <text evidence="1">Catalyzes a reversible aldol reaction between acetaldehyde and D-glyceraldehyde 3-phosphate to generate 2-deoxy-D-ribose 5-phosphate.</text>
</comment>
<comment type="catalytic activity">
    <reaction evidence="1">
        <text>2-deoxy-D-ribose 5-phosphate = D-glyceraldehyde 3-phosphate + acetaldehyde</text>
        <dbReference type="Rhea" id="RHEA:12821"/>
        <dbReference type="ChEBI" id="CHEBI:15343"/>
        <dbReference type="ChEBI" id="CHEBI:59776"/>
        <dbReference type="ChEBI" id="CHEBI:62877"/>
        <dbReference type="EC" id="4.1.2.4"/>
    </reaction>
</comment>
<comment type="pathway">
    <text evidence="1">Carbohydrate degradation; 2-deoxy-D-ribose 1-phosphate degradation; D-glyceraldehyde 3-phosphate and acetaldehyde from 2-deoxy-alpha-D-ribose 1-phosphate: step 2/2.</text>
</comment>
<comment type="subcellular location">
    <subcellularLocation>
        <location evidence="1">Cytoplasm</location>
    </subcellularLocation>
</comment>
<comment type="similarity">
    <text evidence="1">Belongs to the DeoC/FbaB aldolase family. DeoC type 1 subfamily.</text>
</comment>
<name>DEOC_STRPM</name>
<proteinExistence type="inferred from homology"/>
<evidence type="ECO:0000255" key="1">
    <source>
        <dbReference type="HAMAP-Rule" id="MF_00114"/>
    </source>
</evidence>
<accession>Q48RH2</accession>
<gene>
    <name evidence="1" type="primary">deoC</name>
    <name type="ordered locus">M28_Spy1578</name>
</gene>
<keyword id="KW-0963">Cytoplasm</keyword>
<keyword id="KW-0456">Lyase</keyword>
<keyword id="KW-0704">Schiff base</keyword>
<feature type="chain" id="PRO_0000231568" description="Deoxyribose-phosphate aldolase">
    <location>
        <begin position="1"/>
        <end position="223"/>
    </location>
</feature>
<feature type="active site" description="Proton donor/acceptor" evidence="1">
    <location>
        <position position="91"/>
    </location>
</feature>
<feature type="active site" description="Schiff-base intermediate with acetaldehyde" evidence="1">
    <location>
        <position position="153"/>
    </location>
</feature>
<feature type="active site" description="Proton donor/acceptor" evidence="1">
    <location>
        <position position="182"/>
    </location>
</feature>
<protein>
    <recommendedName>
        <fullName evidence="1">Deoxyribose-phosphate aldolase</fullName>
        <shortName evidence="1">DERA</shortName>
        <ecNumber evidence="1">4.1.2.4</ecNumber>
    </recommendedName>
    <alternativeName>
        <fullName evidence="1">2-deoxy-D-ribose 5-phosphate aldolase</fullName>
    </alternativeName>
    <alternativeName>
        <fullName evidence="1">Phosphodeoxyriboaldolase</fullName>
        <shortName evidence="1">Deoxyriboaldolase</shortName>
    </alternativeName>
</protein>
<organism>
    <name type="scientific">Streptococcus pyogenes serotype M28 (strain MGAS6180)</name>
    <dbReference type="NCBI Taxonomy" id="319701"/>
    <lineage>
        <taxon>Bacteria</taxon>
        <taxon>Bacillati</taxon>
        <taxon>Bacillota</taxon>
        <taxon>Bacilli</taxon>
        <taxon>Lactobacillales</taxon>
        <taxon>Streptococcaceae</taxon>
        <taxon>Streptococcus</taxon>
    </lineage>
</organism>